<organism>
    <name type="scientific">Unknown prokaryotic organism</name>
    <dbReference type="NCBI Taxonomy" id="2725"/>
    <lineage>
        <taxon>Bacteria</taxon>
        <taxon>environmental samples</taxon>
    </lineage>
</organism>
<dbReference type="EC" id="3.5.5.1"/>
<dbReference type="EMBL" id="AY487542">
    <property type="protein sequence ID" value="AAR97489.1"/>
    <property type="molecule type" value="Genomic_DNA"/>
</dbReference>
<dbReference type="SMR" id="Q6RWG0"/>
<dbReference type="GO" id="GO:0000257">
    <property type="term" value="F:nitrilase activity"/>
    <property type="evidence" value="ECO:0007669"/>
    <property type="project" value="UniProtKB-EC"/>
</dbReference>
<dbReference type="CDD" id="cd07564">
    <property type="entry name" value="nitrilases_CHs"/>
    <property type="match status" value="1"/>
</dbReference>
<dbReference type="Gene3D" id="3.60.110.10">
    <property type="entry name" value="Carbon-nitrogen hydrolase"/>
    <property type="match status" value="1"/>
</dbReference>
<dbReference type="InterPro" id="IPR003010">
    <property type="entry name" value="C-N_Hydrolase"/>
</dbReference>
<dbReference type="InterPro" id="IPR036526">
    <property type="entry name" value="C-N_Hydrolase_sf"/>
</dbReference>
<dbReference type="InterPro" id="IPR044149">
    <property type="entry name" value="Nitrilases_CHs"/>
</dbReference>
<dbReference type="PANTHER" id="PTHR46044:SF1">
    <property type="entry name" value="CN HYDROLASE DOMAIN-CONTAINING PROTEIN"/>
    <property type="match status" value="1"/>
</dbReference>
<dbReference type="PANTHER" id="PTHR46044">
    <property type="entry name" value="NITRILASE"/>
    <property type="match status" value="1"/>
</dbReference>
<dbReference type="Pfam" id="PF00795">
    <property type="entry name" value="CN_hydrolase"/>
    <property type="match status" value="1"/>
</dbReference>
<dbReference type="SUPFAM" id="SSF56317">
    <property type="entry name" value="Carbon-nitrogen hydrolase"/>
    <property type="match status" value="1"/>
</dbReference>
<dbReference type="PROSITE" id="PS50263">
    <property type="entry name" value="CN_HYDROLASE"/>
    <property type="match status" value="1"/>
</dbReference>
<name>NITR3_UNKP</name>
<proteinExistence type="inferred from homology"/>
<sequence length="330" mass="35680">MKVVKAAAVQISPVLYSREATVEKVVKKIHELGQLGVQFATFPETVVPYYPYFSAVQTGIELLSGTEHLRLLDQAVTVPSPATDAIGEAARKAGMVVSIGVNERDGGTLYNTQLLFDADGTLIQRRRKITPTHFERMIWGQGDGSGLRAVDSKVGRIGQLACFEHNNPLARYALIADGEQIHSAMYPGSAFGEGFAQRMEINIRQHALESGAFVVNATAWLDADQQAQIIKDTGCGIGPISGGCFTTIVAPDGMLMAEPLRSGEGEVIVDLDFTLIDRRKMLMDSAGHYNRPELLSLMIDRTATAHVHERAAHPVSGAEQGPEDLRTPAA</sequence>
<feature type="chain" id="PRO_0000422219" description="Nitrilase 3">
    <location>
        <begin position="1"/>
        <end position="330"/>
    </location>
</feature>
<feature type="domain" description="CN hydrolase" evidence="1">
    <location>
        <begin position="4"/>
        <end position="273"/>
    </location>
</feature>
<feature type="region of interest" description="Disordered" evidence="2">
    <location>
        <begin position="310"/>
        <end position="330"/>
    </location>
</feature>
<feature type="active site" description="Proton acceptor" evidence="1">
    <location>
        <position position="44"/>
    </location>
</feature>
<feature type="active site" description="Proton donor" evidence="1">
    <location>
        <position position="128"/>
    </location>
</feature>
<feature type="active site" description="Nucleophile" evidence="1">
    <location>
        <position position="162"/>
    </location>
</feature>
<protein>
    <recommendedName>
        <fullName>Nitrilase 3</fullName>
        <ecNumber>3.5.5.1</ecNumber>
    </recommendedName>
    <alternativeName>
        <fullName>Nitrilase III</fullName>
    </alternativeName>
</protein>
<comment type="function">
    <text evidence="3">Nitrilases catalyze the mild hydrolytic conversion of organonitriles directly to the corresponding carboxylic acids.</text>
</comment>
<comment type="catalytic activity">
    <reaction>
        <text>a nitrile + 2 H2O = a carboxylate + NH4(+)</text>
        <dbReference type="Rhea" id="RHEA:21724"/>
        <dbReference type="ChEBI" id="CHEBI:15377"/>
        <dbReference type="ChEBI" id="CHEBI:18379"/>
        <dbReference type="ChEBI" id="CHEBI:28938"/>
        <dbReference type="ChEBI" id="CHEBI:29067"/>
        <dbReference type="EC" id="3.5.5.1"/>
    </reaction>
</comment>
<comment type="similarity">
    <text evidence="4">Belongs to the carbon-nitrogen hydrolase superfamily. Nitrilase family.</text>
</comment>
<keyword id="KW-0378">Hydrolase</keyword>
<evidence type="ECO:0000255" key="1">
    <source>
        <dbReference type="PROSITE-ProRule" id="PRU00054"/>
    </source>
</evidence>
<evidence type="ECO:0000256" key="2">
    <source>
        <dbReference type="SAM" id="MobiDB-lite"/>
    </source>
</evidence>
<evidence type="ECO:0000269" key="3">
    <source>
    </source>
</evidence>
<evidence type="ECO:0000305" key="4"/>
<accession>Q6RWG0</accession>
<reference key="1">
    <citation type="journal article" date="2004" name="Appl. Environ. Microbiol.">
        <title>Exploring nitrilase sequence space for enantioselective catalysis.</title>
        <authorList>
            <person name="Robertson D.E."/>
            <person name="Chaplin J.A."/>
            <person name="DeSantis G."/>
            <person name="Podar M."/>
            <person name="Madden M."/>
            <person name="Chi E."/>
            <person name="Richardson T."/>
            <person name="Milan A."/>
            <person name="Miller M."/>
            <person name="Weiner D.P."/>
            <person name="Wong K."/>
            <person name="McQuaid J."/>
            <person name="Farwell B."/>
            <person name="Preston L.A."/>
            <person name="Tan X."/>
            <person name="Snead M.A."/>
            <person name="Keller M."/>
            <person name="Mathur E."/>
            <person name="Kretz P.L."/>
            <person name="Burk M.J."/>
            <person name="Short J.M."/>
        </authorList>
    </citation>
    <scope>NUCLEOTIDE SEQUENCE [GENOMIC DNA]</scope>
</reference>
<reference key="2">
    <citation type="journal article" date="2002" name="J. Am. Chem. Soc.">
        <title>An enzyme library approach to biocatalysis: development of nitrilases for enantioselective production of carboxylic acid derivatives.</title>
        <authorList>
            <person name="DeSantis G."/>
            <person name="Zhu Z."/>
            <person name="Greenberg W.A."/>
            <person name="Wong K."/>
            <person name="Chaplin J."/>
            <person name="Hanson S.R."/>
            <person name="Farwell B."/>
            <person name="Nicholson L.W."/>
            <person name="Rand C.L."/>
            <person name="Weiner D.P."/>
            <person name="Robertson D.E."/>
            <person name="Burk M.J."/>
        </authorList>
    </citation>
    <scope>FUNCTION</scope>
</reference>
<gene>
    <name type="ORF">BD5308</name>
</gene>